<evidence type="ECO:0000255" key="1">
    <source>
        <dbReference type="HAMAP-Rule" id="MF_01393"/>
    </source>
</evidence>
<proteinExistence type="inferred from homology"/>
<gene>
    <name evidence="1" type="primary">atpB</name>
    <name evidence="1" type="synonym">atpI</name>
</gene>
<dbReference type="EMBL" id="X70431">
    <property type="protein sequence ID" value="CAA49870.1"/>
    <property type="molecule type" value="Genomic_DNA"/>
</dbReference>
<dbReference type="SMR" id="Q05364"/>
<dbReference type="GO" id="GO:0031676">
    <property type="term" value="C:plasma membrane-derived thylakoid membrane"/>
    <property type="evidence" value="ECO:0007669"/>
    <property type="project" value="UniProtKB-SubCell"/>
</dbReference>
<dbReference type="GO" id="GO:0045259">
    <property type="term" value="C:proton-transporting ATP synthase complex"/>
    <property type="evidence" value="ECO:0007669"/>
    <property type="project" value="UniProtKB-KW"/>
</dbReference>
<dbReference type="GO" id="GO:0046933">
    <property type="term" value="F:proton-transporting ATP synthase activity, rotational mechanism"/>
    <property type="evidence" value="ECO:0007669"/>
    <property type="project" value="UniProtKB-UniRule"/>
</dbReference>
<dbReference type="CDD" id="cd00310">
    <property type="entry name" value="ATP-synt_Fo_a_6"/>
    <property type="match status" value="1"/>
</dbReference>
<dbReference type="FunFam" id="1.20.120.220:FF:000001">
    <property type="entry name" value="ATP synthase subunit a, chloroplastic"/>
    <property type="match status" value="1"/>
</dbReference>
<dbReference type="Gene3D" id="1.20.120.220">
    <property type="entry name" value="ATP synthase, F0 complex, subunit A"/>
    <property type="match status" value="1"/>
</dbReference>
<dbReference type="HAMAP" id="MF_01393">
    <property type="entry name" value="ATP_synth_a_bact"/>
    <property type="match status" value="1"/>
</dbReference>
<dbReference type="InterPro" id="IPR045082">
    <property type="entry name" value="ATP_syn_F0_a_bact/chloroplast"/>
</dbReference>
<dbReference type="InterPro" id="IPR000568">
    <property type="entry name" value="ATP_synth_F0_asu"/>
</dbReference>
<dbReference type="InterPro" id="IPR023011">
    <property type="entry name" value="ATP_synth_F0_asu_AS"/>
</dbReference>
<dbReference type="InterPro" id="IPR035908">
    <property type="entry name" value="F0_ATP_A_sf"/>
</dbReference>
<dbReference type="NCBIfam" id="TIGR01131">
    <property type="entry name" value="ATP_synt_6_or_A"/>
    <property type="match status" value="1"/>
</dbReference>
<dbReference type="PANTHER" id="PTHR42823">
    <property type="entry name" value="ATP SYNTHASE SUBUNIT A, CHLOROPLASTIC"/>
    <property type="match status" value="1"/>
</dbReference>
<dbReference type="PANTHER" id="PTHR42823:SF3">
    <property type="entry name" value="ATP SYNTHASE SUBUNIT A, CHLOROPLASTIC"/>
    <property type="match status" value="1"/>
</dbReference>
<dbReference type="Pfam" id="PF00119">
    <property type="entry name" value="ATP-synt_A"/>
    <property type="match status" value="1"/>
</dbReference>
<dbReference type="PRINTS" id="PR00123">
    <property type="entry name" value="ATPASEA"/>
</dbReference>
<dbReference type="SUPFAM" id="SSF81336">
    <property type="entry name" value="F1F0 ATP synthase subunit A"/>
    <property type="match status" value="1"/>
</dbReference>
<dbReference type="PROSITE" id="PS00449">
    <property type="entry name" value="ATPASE_A"/>
    <property type="match status" value="1"/>
</dbReference>
<accession>Q05364</accession>
<keyword id="KW-0066">ATP synthesis</keyword>
<keyword id="KW-0138">CF(0)</keyword>
<keyword id="KW-0375">Hydrogen ion transport</keyword>
<keyword id="KW-0406">Ion transport</keyword>
<keyword id="KW-0472">Membrane</keyword>
<keyword id="KW-0793">Thylakoid</keyword>
<keyword id="KW-0812">Transmembrane</keyword>
<keyword id="KW-1133">Transmembrane helix</keyword>
<keyword id="KW-0813">Transport</keyword>
<protein>
    <recommendedName>
        <fullName evidence="1">ATP synthase subunit a</fullName>
    </recommendedName>
    <alternativeName>
        <fullName evidence="1">ATP synthase F0 sector subunit a</fullName>
    </alternativeName>
    <alternativeName>
        <fullName evidence="1">F-ATPase subunit 6</fullName>
    </alternativeName>
</protein>
<comment type="function">
    <text evidence="1">Key component of the proton channel; it plays a direct role in the translocation of protons across the membrane.</text>
</comment>
<comment type="subunit">
    <text evidence="1">F-type ATPases have 2 components, CF(1) - the catalytic core - and CF(0) - the membrane proton channel. CF(1) has five subunits: alpha(3), beta(3), gamma(1), delta(1), epsilon(1). CF(0) has three main subunits: a(1), b(2) and c(9-12). The alpha and beta chains form an alternating ring which encloses part of the gamma chain. CF(1) is attached to CF(0) by a central stalk formed by the gamma and epsilon chains, while a peripheral stalk is formed by the delta and b chains.</text>
</comment>
<comment type="subcellular location">
    <subcellularLocation>
        <location evidence="1">Cellular thylakoid membrane</location>
        <topology evidence="1">Multi-pass membrane protein</topology>
    </subcellularLocation>
</comment>
<comment type="similarity">
    <text evidence="1">Belongs to the ATPase A chain family.</text>
</comment>
<reference key="1">
    <citation type="journal article" date="1993" name="Biochem. J.">
        <title>Organization and sequences of genes for the subunits of ATP synthase in the thermophilic cyanobacterium Synechococcus 6716.</title>
        <authorList>
            <person name="van Walraven H.S."/>
            <person name="Lutter R."/>
            <person name="Walker J.E."/>
        </authorList>
    </citation>
    <scope>NUCLEOTIDE SEQUENCE [GENOMIC DNA]</scope>
</reference>
<sequence length="252" mass="27998">MMPLIHLWTSLPVAKLEVGHHFYWHIGNLKVHGQVFITTWIVMGILIVAALAASRNIQRVPSGIQNLMEYALEFIRDLTKSQMGEHEYRAWVPFVGTLFLFIFVCNWSGALVPWKLIELPEGELAAPTNDINTTVALALLVSLAYFYAGLRKRGLKYFTKYIEPTPVLLPIAILEDFTKPLSLSFRLFGNILADELVVGVLVLLVPLFVPLPVMALGLFTSAIQALVFATLAATYIGEAMEGHGGEHEEAHS</sequence>
<name>ATP6_SYNP1</name>
<organism>
    <name type="scientific">Synechococcus sp. (strain PCC 6716)</name>
    <dbReference type="NCBI Taxonomy" id="32048"/>
    <lineage>
        <taxon>Bacteria</taxon>
        <taxon>Bacillati</taxon>
        <taxon>Cyanobacteriota</taxon>
        <taxon>Cyanophyceae</taxon>
        <taxon>Synechococcales</taxon>
        <taxon>Synechococcaceae</taxon>
        <taxon>Synechococcus</taxon>
    </lineage>
</organism>
<feature type="chain" id="PRO_0000082074" description="ATP synthase subunit a">
    <location>
        <begin position="1"/>
        <end position="252"/>
    </location>
</feature>
<feature type="transmembrane region" description="Helical" evidence="1">
    <location>
        <begin position="33"/>
        <end position="53"/>
    </location>
</feature>
<feature type="transmembrane region" description="Helical" evidence="1">
    <location>
        <begin position="92"/>
        <end position="112"/>
    </location>
</feature>
<feature type="transmembrane region" description="Helical" evidence="1">
    <location>
        <begin position="130"/>
        <end position="150"/>
    </location>
</feature>
<feature type="transmembrane region" description="Helical" evidence="1">
    <location>
        <begin position="196"/>
        <end position="216"/>
    </location>
</feature>
<feature type="transmembrane region" description="Helical" evidence="1">
    <location>
        <begin position="217"/>
        <end position="237"/>
    </location>
</feature>